<name>RBFA_SHEON</name>
<gene>
    <name evidence="1" type="primary">rbfA</name>
    <name type="ordered locus">SO_1205</name>
</gene>
<dbReference type="EMBL" id="AE014299">
    <property type="protein sequence ID" value="AAN54275.1"/>
    <property type="molecule type" value="Genomic_DNA"/>
</dbReference>
<dbReference type="RefSeq" id="NP_716830.1">
    <property type="nucleotide sequence ID" value="NC_004347.2"/>
</dbReference>
<dbReference type="RefSeq" id="WP_011071435.1">
    <property type="nucleotide sequence ID" value="NC_004347.2"/>
</dbReference>
<dbReference type="SMR" id="Q8EHL4"/>
<dbReference type="STRING" id="211586.SO_1205"/>
<dbReference type="PaxDb" id="211586-SO_1205"/>
<dbReference type="KEGG" id="son:SO_1205"/>
<dbReference type="PATRIC" id="fig|211586.12.peg.1157"/>
<dbReference type="eggNOG" id="COG0858">
    <property type="taxonomic scope" value="Bacteria"/>
</dbReference>
<dbReference type="HOGENOM" id="CLU_089475_5_0_6"/>
<dbReference type="OrthoDB" id="307788at2"/>
<dbReference type="PhylomeDB" id="Q8EHL4"/>
<dbReference type="BioCyc" id="SONE211586:G1GMP-1117-MONOMER"/>
<dbReference type="Proteomes" id="UP000008186">
    <property type="component" value="Chromosome"/>
</dbReference>
<dbReference type="GO" id="GO:0005829">
    <property type="term" value="C:cytosol"/>
    <property type="evidence" value="ECO:0000318"/>
    <property type="project" value="GO_Central"/>
</dbReference>
<dbReference type="GO" id="GO:0043024">
    <property type="term" value="F:ribosomal small subunit binding"/>
    <property type="evidence" value="ECO:0000318"/>
    <property type="project" value="GO_Central"/>
</dbReference>
<dbReference type="GO" id="GO:0030490">
    <property type="term" value="P:maturation of SSU-rRNA"/>
    <property type="evidence" value="ECO:0007669"/>
    <property type="project" value="UniProtKB-UniRule"/>
</dbReference>
<dbReference type="GO" id="GO:0042254">
    <property type="term" value="P:ribosome biogenesis"/>
    <property type="evidence" value="ECO:0000318"/>
    <property type="project" value="GO_Central"/>
</dbReference>
<dbReference type="FunFam" id="3.30.300.20:FF:000007">
    <property type="entry name" value="Ribosome-binding factor A"/>
    <property type="match status" value="1"/>
</dbReference>
<dbReference type="Gene3D" id="3.30.300.20">
    <property type="match status" value="1"/>
</dbReference>
<dbReference type="HAMAP" id="MF_00003">
    <property type="entry name" value="RbfA"/>
    <property type="match status" value="1"/>
</dbReference>
<dbReference type="InterPro" id="IPR015946">
    <property type="entry name" value="KH_dom-like_a/b"/>
</dbReference>
<dbReference type="InterPro" id="IPR000238">
    <property type="entry name" value="RbfA"/>
</dbReference>
<dbReference type="InterPro" id="IPR023799">
    <property type="entry name" value="RbfA_dom_sf"/>
</dbReference>
<dbReference type="InterPro" id="IPR020053">
    <property type="entry name" value="Ribosome-bd_factorA_CS"/>
</dbReference>
<dbReference type="NCBIfam" id="TIGR00082">
    <property type="entry name" value="rbfA"/>
    <property type="match status" value="1"/>
</dbReference>
<dbReference type="PANTHER" id="PTHR33515">
    <property type="entry name" value="RIBOSOME-BINDING FACTOR A, CHLOROPLASTIC-RELATED"/>
    <property type="match status" value="1"/>
</dbReference>
<dbReference type="PANTHER" id="PTHR33515:SF1">
    <property type="entry name" value="RIBOSOME-BINDING FACTOR A, CHLOROPLASTIC-RELATED"/>
    <property type="match status" value="1"/>
</dbReference>
<dbReference type="Pfam" id="PF02033">
    <property type="entry name" value="RBFA"/>
    <property type="match status" value="1"/>
</dbReference>
<dbReference type="SUPFAM" id="SSF89919">
    <property type="entry name" value="Ribosome-binding factor A, RbfA"/>
    <property type="match status" value="1"/>
</dbReference>
<dbReference type="PROSITE" id="PS01319">
    <property type="entry name" value="RBFA"/>
    <property type="match status" value="1"/>
</dbReference>
<evidence type="ECO:0000255" key="1">
    <source>
        <dbReference type="HAMAP-Rule" id="MF_00003"/>
    </source>
</evidence>
<evidence type="ECO:0000256" key="2">
    <source>
        <dbReference type="SAM" id="MobiDB-lite"/>
    </source>
</evidence>
<feature type="chain" id="PRO_0000102727" description="Ribosome-binding factor A">
    <location>
        <begin position="1"/>
        <end position="147"/>
    </location>
</feature>
<feature type="region of interest" description="Disordered" evidence="2">
    <location>
        <begin position="122"/>
        <end position="147"/>
    </location>
</feature>
<feature type="compositionally biased region" description="Acidic residues" evidence="2">
    <location>
        <begin position="128"/>
        <end position="147"/>
    </location>
</feature>
<proteinExistence type="inferred from homology"/>
<accession>Q8EHL4</accession>
<protein>
    <recommendedName>
        <fullName evidence="1">Ribosome-binding factor A</fullName>
    </recommendedName>
</protein>
<reference key="1">
    <citation type="journal article" date="2002" name="Nat. Biotechnol.">
        <title>Genome sequence of the dissimilatory metal ion-reducing bacterium Shewanella oneidensis.</title>
        <authorList>
            <person name="Heidelberg J.F."/>
            <person name="Paulsen I.T."/>
            <person name="Nelson K.E."/>
            <person name="Gaidos E.J."/>
            <person name="Nelson W.C."/>
            <person name="Read T.D."/>
            <person name="Eisen J.A."/>
            <person name="Seshadri R."/>
            <person name="Ward N.L."/>
            <person name="Methe B.A."/>
            <person name="Clayton R.A."/>
            <person name="Meyer T."/>
            <person name="Tsapin A."/>
            <person name="Scott J."/>
            <person name="Beanan M.J."/>
            <person name="Brinkac L.M."/>
            <person name="Daugherty S.C."/>
            <person name="DeBoy R.T."/>
            <person name="Dodson R.J."/>
            <person name="Durkin A.S."/>
            <person name="Haft D.H."/>
            <person name="Kolonay J.F."/>
            <person name="Madupu R."/>
            <person name="Peterson J.D."/>
            <person name="Umayam L.A."/>
            <person name="White O."/>
            <person name="Wolf A.M."/>
            <person name="Vamathevan J.J."/>
            <person name="Weidman J.F."/>
            <person name="Impraim M."/>
            <person name="Lee K."/>
            <person name="Berry K.J."/>
            <person name="Lee C."/>
            <person name="Mueller J."/>
            <person name="Khouri H.M."/>
            <person name="Gill J."/>
            <person name="Utterback T.R."/>
            <person name="McDonald L.A."/>
            <person name="Feldblyum T.V."/>
            <person name="Smith H.O."/>
            <person name="Venter J.C."/>
            <person name="Nealson K.H."/>
            <person name="Fraser C.M."/>
        </authorList>
    </citation>
    <scope>NUCLEOTIDE SEQUENCE [LARGE SCALE GENOMIC DNA]</scope>
    <source>
        <strain>ATCC 700550 / JCM 31522 / CIP 106686 / LMG 19005 / NCIMB 14063 / MR-1</strain>
    </source>
</reference>
<keyword id="KW-0963">Cytoplasm</keyword>
<keyword id="KW-1185">Reference proteome</keyword>
<keyword id="KW-0690">Ribosome biogenesis</keyword>
<sequence length="147" mass="16765">MAKEFSRTRRIGQQLQQELAVVLQRDMKDPRIGFVTVNDVDVSRDLSYAKVFVTFFEEDKDVVQEKLNALIAAAPYIRTLVAGRMKLRVMPEIRFVYDSSLVEGMRMSNLVSQVINSDKAKQQQFGSVDDDVIENDIEESDDTEGKV</sequence>
<comment type="function">
    <text evidence="1">One of several proteins that assist in the late maturation steps of the functional core of the 30S ribosomal subunit. Associates with free 30S ribosomal subunits (but not with 30S subunits that are part of 70S ribosomes or polysomes). Required for efficient processing of 16S rRNA. May interact with the 5'-terminal helix region of 16S rRNA.</text>
</comment>
<comment type="subunit">
    <text evidence="1">Monomer. Binds 30S ribosomal subunits, but not 50S ribosomal subunits or 70S ribosomes.</text>
</comment>
<comment type="subcellular location">
    <subcellularLocation>
        <location evidence="1">Cytoplasm</location>
    </subcellularLocation>
</comment>
<comment type="similarity">
    <text evidence="1">Belongs to the RbfA family.</text>
</comment>
<organism>
    <name type="scientific">Shewanella oneidensis (strain ATCC 700550 / JCM 31522 / CIP 106686 / LMG 19005 / NCIMB 14063 / MR-1)</name>
    <dbReference type="NCBI Taxonomy" id="211586"/>
    <lineage>
        <taxon>Bacteria</taxon>
        <taxon>Pseudomonadati</taxon>
        <taxon>Pseudomonadota</taxon>
        <taxon>Gammaproteobacteria</taxon>
        <taxon>Alteromonadales</taxon>
        <taxon>Shewanellaceae</taxon>
        <taxon>Shewanella</taxon>
    </lineage>
</organism>